<gene>
    <name evidence="1" type="primary">rpmD</name>
    <name type="ordered locus">NMC0150</name>
</gene>
<reference key="1">
    <citation type="journal article" date="2007" name="PLoS Genet.">
        <title>Meningococcal genetic variation mechanisms viewed through comparative analysis of serogroup C strain FAM18.</title>
        <authorList>
            <person name="Bentley S.D."/>
            <person name="Vernikos G.S."/>
            <person name="Snyder L.A.S."/>
            <person name="Churcher C."/>
            <person name="Arrowsmith C."/>
            <person name="Chillingworth T."/>
            <person name="Cronin A."/>
            <person name="Davis P.H."/>
            <person name="Holroyd N.E."/>
            <person name="Jagels K."/>
            <person name="Maddison M."/>
            <person name="Moule S."/>
            <person name="Rabbinowitsch E."/>
            <person name="Sharp S."/>
            <person name="Unwin L."/>
            <person name="Whitehead S."/>
            <person name="Quail M.A."/>
            <person name="Achtman M."/>
            <person name="Barrell B.G."/>
            <person name="Saunders N.J."/>
            <person name="Parkhill J."/>
        </authorList>
    </citation>
    <scope>NUCLEOTIDE SEQUENCE [LARGE SCALE GENOMIC DNA]</scope>
    <source>
        <strain>ATCC 700532 / DSM 15464 / FAM18</strain>
    </source>
</reference>
<keyword id="KW-0687">Ribonucleoprotein</keyword>
<keyword id="KW-0689">Ribosomal protein</keyword>
<evidence type="ECO:0000255" key="1">
    <source>
        <dbReference type="HAMAP-Rule" id="MF_01371"/>
    </source>
</evidence>
<evidence type="ECO:0000305" key="2"/>
<protein>
    <recommendedName>
        <fullName evidence="1">Large ribosomal subunit protein uL30</fullName>
    </recommendedName>
    <alternativeName>
        <fullName evidence="2">50S ribosomal protein L30</fullName>
    </alternativeName>
</protein>
<proteinExistence type="inferred from homology"/>
<comment type="subunit">
    <text evidence="1">Part of the 50S ribosomal subunit.</text>
</comment>
<comment type="similarity">
    <text evidence="1">Belongs to the universal ribosomal protein uL30 family.</text>
</comment>
<dbReference type="EMBL" id="AM421808">
    <property type="protein sequence ID" value="CAM09469.1"/>
    <property type="molecule type" value="Genomic_DNA"/>
</dbReference>
<dbReference type="RefSeq" id="WP_002215447.1">
    <property type="nucleotide sequence ID" value="NC_008767.1"/>
</dbReference>
<dbReference type="SMR" id="A1KRJ1"/>
<dbReference type="GeneID" id="93387235"/>
<dbReference type="KEGG" id="nmc:NMC0150"/>
<dbReference type="HOGENOM" id="CLU_131047_1_4_4"/>
<dbReference type="Proteomes" id="UP000002286">
    <property type="component" value="Chromosome"/>
</dbReference>
<dbReference type="GO" id="GO:0022625">
    <property type="term" value="C:cytosolic large ribosomal subunit"/>
    <property type="evidence" value="ECO:0007669"/>
    <property type="project" value="TreeGrafter"/>
</dbReference>
<dbReference type="GO" id="GO:0003735">
    <property type="term" value="F:structural constituent of ribosome"/>
    <property type="evidence" value="ECO:0007669"/>
    <property type="project" value="InterPro"/>
</dbReference>
<dbReference type="GO" id="GO:0006412">
    <property type="term" value="P:translation"/>
    <property type="evidence" value="ECO:0007669"/>
    <property type="project" value="UniProtKB-UniRule"/>
</dbReference>
<dbReference type="CDD" id="cd01658">
    <property type="entry name" value="Ribosomal_L30"/>
    <property type="match status" value="1"/>
</dbReference>
<dbReference type="FunFam" id="3.30.1390.20:FF:000001">
    <property type="entry name" value="50S ribosomal protein L30"/>
    <property type="match status" value="1"/>
</dbReference>
<dbReference type="Gene3D" id="3.30.1390.20">
    <property type="entry name" value="Ribosomal protein L30, ferredoxin-like fold domain"/>
    <property type="match status" value="1"/>
</dbReference>
<dbReference type="HAMAP" id="MF_01371_B">
    <property type="entry name" value="Ribosomal_uL30_B"/>
    <property type="match status" value="1"/>
</dbReference>
<dbReference type="InterPro" id="IPR036919">
    <property type="entry name" value="Ribo_uL30_ferredoxin-like_sf"/>
</dbReference>
<dbReference type="InterPro" id="IPR005996">
    <property type="entry name" value="Ribosomal_uL30_bac-type"/>
</dbReference>
<dbReference type="InterPro" id="IPR016082">
    <property type="entry name" value="Ribosomal_uL30_ferredoxin-like"/>
</dbReference>
<dbReference type="NCBIfam" id="TIGR01308">
    <property type="entry name" value="rpmD_bact"/>
    <property type="match status" value="1"/>
</dbReference>
<dbReference type="PANTHER" id="PTHR15892:SF2">
    <property type="entry name" value="LARGE RIBOSOMAL SUBUNIT PROTEIN UL30M"/>
    <property type="match status" value="1"/>
</dbReference>
<dbReference type="PANTHER" id="PTHR15892">
    <property type="entry name" value="MITOCHONDRIAL RIBOSOMAL PROTEIN L30"/>
    <property type="match status" value="1"/>
</dbReference>
<dbReference type="Pfam" id="PF00327">
    <property type="entry name" value="Ribosomal_L30"/>
    <property type="match status" value="1"/>
</dbReference>
<dbReference type="PIRSF" id="PIRSF002211">
    <property type="entry name" value="Ribosomal_L30_bac-type"/>
    <property type="match status" value="1"/>
</dbReference>
<dbReference type="SUPFAM" id="SSF55129">
    <property type="entry name" value="Ribosomal protein L30p/L7e"/>
    <property type="match status" value="1"/>
</dbReference>
<organism>
    <name type="scientific">Neisseria meningitidis serogroup C / serotype 2a (strain ATCC 700532 / DSM 15464 / FAM18)</name>
    <dbReference type="NCBI Taxonomy" id="272831"/>
    <lineage>
        <taxon>Bacteria</taxon>
        <taxon>Pseudomonadati</taxon>
        <taxon>Pseudomonadota</taxon>
        <taxon>Betaproteobacteria</taxon>
        <taxon>Neisseriales</taxon>
        <taxon>Neisseriaceae</taxon>
        <taxon>Neisseria</taxon>
    </lineage>
</organism>
<accession>A1KRJ1</accession>
<feature type="chain" id="PRO_1000056079" description="Large ribosomal subunit protein uL30">
    <location>
        <begin position="1"/>
        <end position="61"/>
    </location>
</feature>
<sequence length="61" mass="6946">MAEQKKIRVTLVKSLIGTIESHRACARGLGLRRREHTVEVLDTPENRGMINKISYLLKVES</sequence>
<name>RL30_NEIMF</name>